<accession>Q07732</accession>
<accession>D6VRB7</accession>
<proteinExistence type="evidence at protein level"/>
<evidence type="ECO:0000255" key="1"/>
<evidence type="ECO:0000256" key="2">
    <source>
        <dbReference type="SAM" id="MobiDB-lite"/>
    </source>
</evidence>
<evidence type="ECO:0000269" key="3">
    <source>
    </source>
</evidence>
<evidence type="ECO:0000269" key="4">
    <source>
    </source>
</evidence>
<evidence type="ECO:0000305" key="5"/>
<name>ADY3_YEAST</name>
<feature type="chain" id="PRO_0000064461" description="Accumulates dyads protein 3">
    <location>
        <begin position="1"/>
        <end position="790"/>
    </location>
</feature>
<feature type="region of interest" description="Disordered" evidence="2">
    <location>
        <begin position="8"/>
        <end position="122"/>
    </location>
</feature>
<feature type="coiled-coil region" evidence="1">
    <location>
        <begin position="241"/>
        <end position="328"/>
    </location>
</feature>
<feature type="coiled-coil region" evidence="1">
    <location>
        <begin position="361"/>
        <end position="430"/>
    </location>
</feature>
<feature type="coiled-coil region" evidence="1">
    <location>
        <begin position="477"/>
        <end position="498"/>
    </location>
</feature>
<feature type="coiled-coil region" evidence="1">
    <location>
        <begin position="540"/>
        <end position="658"/>
    </location>
</feature>
<feature type="compositionally biased region" description="Basic and acidic residues" evidence="2">
    <location>
        <begin position="39"/>
        <end position="49"/>
    </location>
</feature>
<feature type="compositionally biased region" description="Polar residues" evidence="2">
    <location>
        <begin position="50"/>
        <end position="78"/>
    </location>
</feature>
<feature type="compositionally biased region" description="Polar residues" evidence="2">
    <location>
        <begin position="89"/>
        <end position="108"/>
    </location>
</feature>
<feature type="sequence conflict" description="In Ref. 1; CAA98819." evidence="5" ref="1">
    <original>E</original>
    <variation>G</variation>
    <location>
        <position position="569"/>
    </location>
</feature>
<dbReference type="EMBL" id="Z74287">
    <property type="protein sequence ID" value="CAA98819.1"/>
    <property type="molecule type" value="Genomic_DNA"/>
</dbReference>
<dbReference type="EMBL" id="BK006938">
    <property type="protein sequence ID" value="DAA11627.2"/>
    <property type="molecule type" value="Genomic_DNA"/>
</dbReference>
<dbReference type="PIR" id="S67803">
    <property type="entry name" value="S67803"/>
</dbReference>
<dbReference type="RefSeq" id="NP_010042.2">
    <property type="nucleotide sequence ID" value="NM_001180299.2"/>
</dbReference>
<dbReference type="SMR" id="Q07732"/>
<dbReference type="BioGRID" id="31872">
    <property type="interactions" value="84"/>
</dbReference>
<dbReference type="DIP" id="DIP-1811N"/>
<dbReference type="FunCoup" id="Q07732">
    <property type="interactions" value="76"/>
</dbReference>
<dbReference type="IntAct" id="Q07732">
    <property type="interactions" value="43"/>
</dbReference>
<dbReference type="MINT" id="Q07732"/>
<dbReference type="STRING" id="4932.YDL239C"/>
<dbReference type="PaxDb" id="4932-YDL239C"/>
<dbReference type="PeptideAtlas" id="Q07732"/>
<dbReference type="EnsemblFungi" id="YDL239C_mRNA">
    <property type="protein sequence ID" value="YDL239C"/>
    <property type="gene ID" value="YDL239C"/>
</dbReference>
<dbReference type="GeneID" id="851359"/>
<dbReference type="KEGG" id="sce:YDL239C"/>
<dbReference type="AGR" id="SGD:S000002398"/>
<dbReference type="SGD" id="S000002398">
    <property type="gene designation" value="ADY3"/>
</dbReference>
<dbReference type="VEuPathDB" id="FungiDB:YDL239C"/>
<dbReference type="GeneTree" id="ENSGT00940000176826"/>
<dbReference type="HOGENOM" id="CLU_355332_0_0_1"/>
<dbReference type="InParanoid" id="Q07732"/>
<dbReference type="OMA" id="NRSESWA"/>
<dbReference type="OrthoDB" id="5376259at2759"/>
<dbReference type="BioCyc" id="YEAST:G3O-29616-MONOMER"/>
<dbReference type="BioGRID-ORCS" id="851359">
    <property type="hits" value="4 hits in 10 CRISPR screens"/>
</dbReference>
<dbReference type="CD-CODE" id="876000F7">
    <property type="entry name" value="Centrosome"/>
</dbReference>
<dbReference type="PRO" id="PR:Q07732"/>
<dbReference type="Proteomes" id="UP000002311">
    <property type="component" value="Chromosome IV"/>
</dbReference>
<dbReference type="RNAct" id="Q07732">
    <property type="molecule type" value="protein"/>
</dbReference>
<dbReference type="GO" id="GO:0000785">
    <property type="term" value="C:chromatin"/>
    <property type="evidence" value="ECO:0000318"/>
    <property type="project" value="GO_Central"/>
</dbReference>
<dbReference type="GO" id="GO:0000793">
    <property type="term" value="C:condensed chromosome"/>
    <property type="evidence" value="ECO:0000318"/>
    <property type="project" value="GO_Central"/>
</dbReference>
<dbReference type="GO" id="GO:0000796">
    <property type="term" value="C:condensin complex"/>
    <property type="evidence" value="ECO:0000318"/>
    <property type="project" value="GO_Central"/>
</dbReference>
<dbReference type="GO" id="GO:0005777">
    <property type="term" value="C:peroxisome"/>
    <property type="evidence" value="ECO:0000314"/>
    <property type="project" value="SGD"/>
</dbReference>
<dbReference type="GO" id="GO:0005628">
    <property type="term" value="C:prospore membrane"/>
    <property type="evidence" value="ECO:0000314"/>
    <property type="project" value="SGD"/>
</dbReference>
<dbReference type="GO" id="GO:0070056">
    <property type="term" value="C:prospore membrane leading edge"/>
    <property type="evidence" value="ECO:0000314"/>
    <property type="project" value="SGD"/>
</dbReference>
<dbReference type="GO" id="GO:0005816">
    <property type="term" value="C:spindle pole body"/>
    <property type="evidence" value="ECO:0000314"/>
    <property type="project" value="SGD"/>
</dbReference>
<dbReference type="GO" id="GO:0003682">
    <property type="term" value="F:chromatin binding"/>
    <property type="evidence" value="ECO:0000318"/>
    <property type="project" value="GO_Central"/>
</dbReference>
<dbReference type="GO" id="GO:0030476">
    <property type="term" value="P:ascospore wall assembly"/>
    <property type="evidence" value="ECO:0000315"/>
    <property type="project" value="SGD"/>
</dbReference>
<dbReference type="GO" id="GO:0032120">
    <property type="term" value="P:ascospore-type prospore membrane formation"/>
    <property type="evidence" value="ECO:0000315"/>
    <property type="project" value="SGD"/>
</dbReference>
<dbReference type="GO" id="GO:0051301">
    <property type="term" value="P:cell division"/>
    <property type="evidence" value="ECO:0007669"/>
    <property type="project" value="UniProtKB-KW"/>
</dbReference>
<dbReference type="GO" id="GO:0000001">
    <property type="term" value="P:mitochondrion inheritance"/>
    <property type="evidence" value="ECO:0000315"/>
    <property type="project" value="SGD"/>
</dbReference>
<dbReference type="GO" id="GO:0007076">
    <property type="term" value="P:mitotic chromosome condensation"/>
    <property type="evidence" value="ECO:0000318"/>
    <property type="project" value="GO_Central"/>
</dbReference>
<dbReference type="GO" id="GO:0030435">
    <property type="term" value="P:sporulation resulting in formation of a cellular spore"/>
    <property type="evidence" value="ECO:0000315"/>
    <property type="project" value="SGD"/>
</dbReference>
<dbReference type="InterPro" id="IPR021750">
    <property type="entry name" value="Sid4-like"/>
</dbReference>
<dbReference type="Pfam" id="PF11778">
    <property type="entry name" value="SID"/>
    <property type="match status" value="1"/>
</dbReference>
<protein>
    <recommendedName>
        <fullName>Accumulates dyads protein 3</fullName>
    </recommendedName>
</protein>
<keyword id="KW-0131">Cell cycle</keyword>
<keyword id="KW-0132">Cell division</keyword>
<keyword id="KW-0175">Coiled coil</keyword>
<keyword id="KW-0963">Cytoplasm</keyword>
<keyword id="KW-0206">Cytoskeleton</keyword>
<keyword id="KW-0469">Meiosis</keyword>
<keyword id="KW-0472">Membrane</keyword>
<keyword id="KW-0597">Phosphoprotein</keyword>
<keyword id="KW-1185">Reference proteome</keyword>
<keyword id="KW-0749">Sporulation</keyword>
<organism>
    <name type="scientific">Saccharomyces cerevisiae (strain ATCC 204508 / S288c)</name>
    <name type="common">Baker's yeast</name>
    <dbReference type="NCBI Taxonomy" id="559292"/>
    <lineage>
        <taxon>Eukaryota</taxon>
        <taxon>Fungi</taxon>
        <taxon>Dikarya</taxon>
        <taxon>Ascomycota</taxon>
        <taxon>Saccharomycotina</taxon>
        <taxon>Saccharomycetes</taxon>
        <taxon>Saccharomycetales</taxon>
        <taxon>Saccharomycetaceae</taxon>
        <taxon>Saccharomyces</taxon>
    </lineage>
</organism>
<sequence>MNHWLAFLNKPESLKEQNSDCDQQGEMRHVTDGTLTKSPESKPFRERRSQTWIDSEVPTSTEKSNVQESISSDIISKLSNRRSRRNRSESWAGSEASSPSGNISTLENATEKNTLKSPNKFLQRGGLPTVGIGSQALSPAGKPSTLGNVSPGKFTTYKVHNSIEVNRFSSTPTKLLTNPHKVAAISNDEHYVVSNESLEENIEVAHLENVFRSSKTPDEEQSEYMKLGEIRLSSSSYGGSISKENSLPKVLDELQSQNEEIKALRQKLEEKDDRIQELEELNSMNDAKLQRIEDLQKEFHNERKAASKRLNIVQDRFRKEIKKIREEKITDFQNKNASKKEKNEVTSAKTKCKAFSQRNILVSELYRKQKQILNLQQENDKFLKDINESNNSIVKLRSEVEILKSNLQLSQDENKKLHDNGSFYEKRLNDVYSYMQNLSLFEKDLGKFILEEMKCGHSPSMFQNGFAKLYPDFQDIKNLENMEQYKQLKGKIELLEKNDRIRLEKIISVFKLINERLHFMQQQHSHKIKYLQKEALTKEQQFRLEKRRWHDILNLKEENFQKLKSELKEKLILSEKIQKNAEDKLNDYMNEHQEIVEKLQNQALIASRWSTQIQESENTHKKITDELAGKQSEILKLEETILSLKEDVFQEKLNLKKLYGDPSTELNFETVGKSFPHITKEKYDSLGLDILTDLTYVQSQNLIKNLLIVLDIPLKTFLKIVPTIVIQLRCELTLLTKFANDLNLKVFGKQLDFKSRRKVAMNEFLNNHDIAEVKHPLEYDLQALFKYFFS</sequence>
<comment type="function">
    <text evidence="3 4">Involved in the pathway that organizes the prospore membrane (PSM) during sporulation. Mediates the assembly of the DON1 ring structure at the leading edge of PSM during meiosis II. May constitute a physical link between SSP1-containing PSM precursors and the spindle pole body (SPB) and may facilitate the recruitment of other factors that are required to promote spore wall formation.</text>
</comment>
<comment type="subunit">
    <text evidence="3 4">Interacts directly with SSP1. Probable component of a SPB complex composed of ADY3, SSP1, DON1, MPC54, SPO21/MPC70, NUD1 and CNM67.</text>
</comment>
<comment type="interaction">
    <interactant intactId="EBI-33406">
        <id>Q07732</id>
    </interactant>
    <interactant intactId="EBI-34513">
        <id>Q08550</id>
        <label>MPC54</label>
    </interactant>
    <organismsDiffer>false</organismsDiffer>
    <experiments>3</experiments>
</comment>
<comment type="interaction">
    <interactant intactId="EBI-33406">
        <id>Q07732</id>
    </interactant>
    <interactant intactId="EBI-36275">
        <id>Q12411</id>
        <label>SPO21</label>
    </interactant>
    <organismsDiffer>false</organismsDiffer>
    <experiments>5</experiments>
</comment>
<comment type="interaction">
    <interactant intactId="EBI-33406">
        <id>Q07732</id>
    </interactant>
    <interactant intactId="EBI-24852">
        <id>P38871</id>
        <label>SSP1</label>
    </interactant>
    <organismsDiffer>false</organismsDiffer>
    <experiments>3</experiments>
</comment>
<comment type="subcellular location">
    <subcellularLocation>
        <location>Prospore membrane</location>
    </subcellularLocation>
    <subcellularLocation>
        <location>Cytoplasm</location>
        <location>Cytoskeleton</location>
        <location>Microtubule organizing center</location>
        <location>Spindle pole body</location>
    </subcellularLocation>
    <text>Localizes to the leading edge, which cover the ring-shape opening of the PSMs during meiosis II. Colocalizes with DON1 to dots in the cytoplasm and at the SPB. Its localization to the PSMs but not to the SPBs depends on SSP1.</text>
</comment>
<comment type="developmental stage">
    <text>Meiosis-specific. Expressed from 3 to 9 hours after induction of sporulation. Not expressed during mitosis.</text>
</comment>
<comment type="PTM">
    <text evidence="3">Phosphorylated.</text>
</comment>
<gene>
    <name type="primary">ADY3</name>
    <name type="ordered locus">YDL239C</name>
</gene>
<reference key="1">
    <citation type="journal article" date="1997" name="Nature">
        <title>The nucleotide sequence of Saccharomyces cerevisiae chromosome IV.</title>
        <authorList>
            <person name="Jacq C."/>
            <person name="Alt-Moerbe J."/>
            <person name="Andre B."/>
            <person name="Arnold W."/>
            <person name="Bahr A."/>
            <person name="Ballesta J.P.G."/>
            <person name="Bargues M."/>
            <person name="Baron L."/>
            <person name="Becker A."/>
            <person name="Biteau N."/>
            <person name="Bloecker H."/>
            <person name="Blugeon C."/>
            <person name="Boskovic J."/>
            <person name="Brandt P."/>
            <person name="Brueckner M."/>
            <person name="Buitrago M.J."/>
            <person name="Coster F."/>
            <person name="Delaveau T."/>
            <person name="del Rey F."/>
            <person name="Dujon B."/>
            <person name="Eide L.G."/>
            <person name="Garcia-Cantalejo J.M."/>
            <person name="Goffeau A."/>
            <person name="Gomez-Peris A."/>
            <person name="Granotier C."/>
            <person name="Hanemann V."/>
            <person name="Hankeln T."/>
            <person name="Hoheisel J.D."/>
            <person name="Jaeger W."/>
            <person name="Jimenez A."/>
            <person name="Jonniaux J.-L."/>
            <person name="Kraemer C."/>
            <person name="Kuester H."/>
            <person name="Laamanen P."/>
            <person name="Legros Y."/>
            <person name="Louis E.J."/>
            <person name="Moeller-Rieker S."/>
            <person name="Monnet A."/>
            <person name="Moro M."/>
            <person name="Mueller-Auer S."/>
            <person name="Nussbaumer B."/>
            <person name="Paricio N."/>
            <person name="Paulin L."/>
            <person name="Perea J."/>
            <person name="Perez-Alonso M."/>
            <person name="Perez-Ortin J.E."/>
            <person name="Pohl T.M."/>
            <person name="Prydz H."/>
            <person name="Purnelle B."/>
            <person name="Rasmussen S.W."/>
            <person name="Remacha M.A."/>
            <person name="Revuelta J.L."/>
            <person name="Rieger M."/>
            <person name="Salom D."/>
            <person name="Saluz H.P."/>
            <person name="Saiz J.E."/>
            <person name="Saren A.-M."/>
            <person name="Schaefer M."/>
            <person name="Scharfe M."/>
            <person name="Schmidt E.R."/>
            <person name="Schneider C."/>
            <person name="Scholler P."/>
            <person name="Schwarz S."/>
            <person name="Soler-Mira A."/>
            <person name="Urrestarazu L.A."/>
            <person name="Verhasselt P."/>
            <person name="Vissers S."/>
            <person name="Voet M."/>
            <person name="Volckaert G."/>
            <person name="Wagner G."/>
            <person name="Wambutt R."/>
            <person name="Wedler E."/>
            <person name="Wedler H."/>
            <person name="Woelfl S."/>
            <person name="Harris D.E."/>
            <person name="Bowman S."/>
            <person name="Brown D."/>
            <person name="Churcher C.M."/>
            <person name="Connor R."/>
            <person name="Dedman K."/>
            <person name="Gentles S."/>
            <person name="Hamlin N."/>
            <person name="Hunt S."/>
            <person name="Jones L."/>
            <person name="McDonald S."/>
            <person name="Murphy L.D."/>
            <person name="Niblett D."/>
            <person name="Odell C."/>
            <person name="Oliver K."/>
            <person name="Rajandream M.A."/>
            <person name="Richards C."/>
            <person name="Shore L."/>
            <person name="Walsh S.V."/>
            <person name="Barrell B.G."/>
            <person name="Dietrich F.S."/>
            <person name="Mulligan J.T."/>
            <person name="Allen E."/>
            <person name="Araujo R."/>
            <person name="Aviles E."/>
            <person name="Berno A."/>
            <person name="Carpenter J."/>
            <person name="Chen E."/>
            <person name="Cherry J.M."/>
            <person name="Chung E."/>
            <person name="Duncan M."/>
            <person name="Hunicke-Smith S."/>
            <person name="Hyman R.W."/>
            <person name="Komp C."/>
            <person name="Lashkari D."/>
            <person name="Lew H."/>
            <person name="Lin D."/>
            <person name="Mosedale D."/>
            <person name="Nakahara K."/>
            <person name="Namath A."/>
            <person name="Oefner P."/>
            <person name="Oh C."/>
            <person name="Petel F.X."/>
            <person name="Roberts D."/>
            <person name="Schramm S."/>
            <person name="Schroeder M."/>
            <person name="Shogren T."/>
            <person name="Shroff N."/>
            <person name="Winant A."/>
            <person name="Yelton M.A."/>
            <person name="Botstein D."/>
            <person name="Davis R.W."/>
            <person name="Johnston M."/>
            <person name="Andrews S."/>
            <person name="Brinkman R."/>
            <person name="Cooper J."/>
            <person name="Ding H."/>
            <person name="Du Z."/>
            <person name="Favello A."/>
            <person name="Fulton L."/>
            <person name="Gattung S."/>
            <person name="Greco T."/>
            <person name="Hallsworth K."/>
            <person name="Hawkins J."/>
            <person name="Hillier L.W."/>
            <person name="Jier M."/>
            <person name="Johnson D."/>
            <person name="Johnston L."/>
            <person name="Kirsten J."/>
            <person name="Kucaba T."/>
            <person name="Langston Y."/>
            <person name="Latreille P."/>
            <person name="Le T."/>
            <person name="Mardis E."/>
            <person name="Menezes S."/>
            <person name="Miller N."/>
            <person name="Nhan M."/>
            <person name="Pauley A."/>
            <person name="Peluso D."/>
            <person name="Rifkin L."/>
            <person name="Riles L."/>
            <person name="Taich A."/>
            <person name="Trevaskis E."/>
            <person name="Vignati D."/>
            <person name="Wilcox L."/>
            <person name="Wohldman P."/>
            <person name="Vaudin M."/>
            <person name="Wilson R."/>
            <person name="Waterston R."/>
            <person name="Albermann K."/>
            <person name="Hani J."/>
            <person name="Heumann K."/>
            <person name="Kleine K."/>
            <person name="Mewes H.-W."/>
            <person name="Zollner A."/>
            <person name="Zaccaria P."/>
        </authorList>
    </citation>
    <scope>NUCLEOTIDE SEQUENCE [LARGE SCALE GENOMIC DNA]</scope>
    <source>
        <strain>ATCC 204508 / S288c</strain>
    </source>
</reference>
<reference key="2">
    <citation type="journal article" date="2014" name="G3 (Bethesda)">
        <title>The reference genome sequence of Saccharomyces cerevisiae: Then and now.</title>
        <authorList>
            <person name="Engel S.R."/>
            <person name="Dietrich F.S."/>
            <person name="Fisk D.G."/>
            <person name="Binkley G."/>
            <person name="Balakrishnan R."/>
            <person name="Costanzo M.C."/>
            <person name="Dwight S.S."/>
            <person name="Hitz B.C."/>
            <person name="Karra K."/>
            <person name="Nash R.S."/>
            <person name="Weng S."/>
            <person name="Wong E.D."/>
            <person name="Lloyd P."/>
            <person name="Skrzypek M.S."/>
            <person name="Miyasato S.R."/>
            <person name="Simison M."/>
            <person name="Cherry J.M."/>
        </authorList>
    </citation>
    <scope>GENOME REANNOTATION</scope>
    <scope>SEQUENCE REVISION TO 569</scope>
    <source>
        <strain>ATCC 204508 / S288c</strain>
    </source>
</reference>
<reference key="3">
    <citation type="journal article" date="2001" name="EMBO J.">
        <title>Prospore membrane formation linked to the leading edge protein (LEP) coat assembly.</title>
        <authorList>
            <person name="Moreno-Borchart A.C."/>
            <person name="Strasser K."/>
            <person name="Finkbeiner M.G."/>
            <person name="Shevchenko A."/>
            <person name="Shevchenko A."/>
            <person name="Knop M."/>
        </authorList>
    </citation>
    <scope>IDENTIFICATION BY MASS SPECTROMETRY</scope>
    <scope>FUNCTION</scope>
    <scope>SUBCELLULAR LOCATION</scope>
    <scope>PHOSPHORYLATION</scope>
    <scope>COMPOSITION OF A SPB COMPLEX</scope>
    <scope>INTERACTION WITH SSP1; NUD1; CNM67 AND MPC54</scope>
</reference>
<reference key="4">
    <citation type="journal article" date="2002" name="Genetics">
        <title>Ady3p links spindle pole body function to spore wall synthesis in Saccharomyces cerevisiae.</title>
        <authorList>
            <person name="Nickas M.E."/>
            <person name="Neiman A.M."/>
        </authorList>
    </citation>
    <scope>FUNCTION</scope>
    <scope>SUBCELLULAR LOCATION</scope>
    <scope>INTERACTION WITH SPO21; NUD1 AND CNM67</scope>
</reference>